<gene>
    <name type="primary">DBP2</name>
    <name type="ORF">UMAG_10095</name>
</gene>
<name>DBP2_MYCMD</name>
<organism>
    <name type="scientific">Mycosarcoma maydis</name>
    <name type="common">Corn smut fungus</name>
    <name type="synonym">Ustilago maydis</name>
    <dbReference type="NCBI Taxonomy" id="5270"/>
    <lineage>
        <taxon>Eukaryota</taxon>
        <taxon>Fungi</taxon>
        <taxon>Dikarya</taxon>
        <taxon>Basidiomycota</taxon>
        <taxon>Ustilaginomycotina</taxon>
        <taxon>Ustilaginomycetes</taxon>
        <taxon>Ustilaginales</taxon>
        <taxon>Ustilaginaceae</taxon>
        <taxon>Mycosarcoma</taxon>
    </lineage>
</organism>
<keyword id="KW-0067">ATP-binding</keyword>
<keyword id="KW-0963">Cytoplasm</keyword>
<keyword id="KW-0347">Helicase</keyword>
<keyword id="KW-0378">Hydrolase</keyword>
<keyword id="KW-0866">Nonsense-mediated mRNA decay</keyword>
<keyword id="KW-0547">Nucleotide-binding</keyword>
<keyword id="KW-0539">Nucleus</keyword>
<keyword id="KW-1185">Reference proteome</keyword>
<keyword id="KW-0690">Ribosome biogenesis</keyword>
<keyword id="KW-0694">RNA-binding</keyword>
<keyword id="KW-0698">rRNA processing</keyword>
<sequence length="552" mass="59073">MSYGGYSGGSGRGGSYGGGRGGYGGGSSSYGNGGSSYGGGSSYGGGSSYGNGGGGYGGGYGGGYGGGDRMSNLGSNLGAVDWNSVNLVPFEKNFYVEDPRVSNRSDSEVQQYRASKQMTIQGQNVPKPVTSFDEAGFPDYILSEIKKMGFSEPSAIQSQAWPMALSGRDLVAIAETGSGKTIGFALPAMVHINAQPLLKPGDGPIALILAPTRELANQIQVECNRFGGSSRLRTCAVYGGVPKGPQIRDLQRGAEICIATPGRLIDMVDAGKTNLRRVTYLVMDEADRMLDMGFEPQIRKILQQIRPDRQTLMFSATWPKEVQRLAGDFLNNYAQVNIGSTELAANHNVKQIIEVCTEFEKKGKLIGHLETISAENGKVIIFTSTKRVADDLTKFLRQDGWPALAIHGDKQQQERDWVLAEFKSGRSPIMVATAVASRGLDVKDISYVINYDFPTNTEDYVHQIGRTGRAGRTGTAYTYFTPENSKSARELIGILREAKQEIPREIEEMGRFGGGGGGRGFRGGRGRGRGRGGYGGGGRTGANSFAVGNSRW</sequence>
<evidence type="ECO:0000250" key="1"/>
<evidence type="ECO:0000255" key="2">
    <source>
        <dbReference type="PROSITE-ProRule" id="PRU00541"/>
    </source>
</evidence>
<evidence type="ECO:0000255" key="3">
    <source>
        <dbReference type="PROSITE-ProRule" id="PRU00542"/>
    </source>
</evidence>
<evidence type="ECO:0000256" key="4">
    <source>
        <dbReference type="SAM" id="MobiDB-lite"/>
    </source>
</evidence>
<evidence type="ECO:0000305" key="5"/>
<proteinExistence type="inferred from homology"/>
<dbReference type="EC" id="3.6.4.13"/>
<dbReference type="EMBL" id="CM003140">
    <property type="protein sequence ID" value="KIS71885.1"/>
    <property type="molecule type" value="Genomic_DNA"/>
</dbReference>
<dbReference type="RefSeq" id="XP_011386653.1">
    <property type="nucleotide sequence ID" value="XM_011388351.1"/>
</dbReference>
<dbReference type="SMR" id="Q4PHU9"/>
<dbReference type="FunCoup" id="Q4PHU9">
    <property type="interactions" value="648"/>
</dbReference>
<dbReference type="STRING" id="237631.Q4PHU9"/>
<dbReference type="EnsemblFungi" id="KIS71885">
    <property type="protein sequence ID" value="KIS71885"/>
    <property type="gene ID" value="UMAG_10095"/>
</dbReference>
<dbReference type="GeneID" id="23566166"/>
<dbReference type="KEGG" id="uma:UMAG_10095"/>
<dbReference type="VEuPathDB" id="FungiDB:UMAG_10095"/>
<dbReference type="eggNOG" id="KOG0331">
    <property type="taxonomic scope" value="Eukaryota"/>
</dbReference>
<dbReference type="InParanoid" id="Q4PHU9"/>
<dbReference type="OrthoDB" id="196131at2759"/>
<dbReference type="Proteomes" id="UP000000561">
    <property type="component" value="Chromosome 1"/>
</dbReference>
<dbReference type="GO" id="GO:0005737">
    <property type="term" value="C:cytoplasm"/>
    <property type="evidence" value="ECO:0000318"/>
    <property type="project" value="GO_Central"/>
</dbReference>
<dbReference type="GO" id="GO:0005634">
    <property type="term" value="C:nucleus"/>
    <property type="evidence" value="ECO:0000318"/>
    <property type="project" value="GO_Central"/>
</dbReference>
<dbReference type="GO" id="GO:1990904">
    <property type="term" value="C:ribonucleoprotein complex"/>
    <property type="evidence" value="ECO:0000318"/>
    <property type="project" value="GO_Central"/>
</dbReference>
<dbReference type="GO" id="GO:0005524">
    <property type="term" value="F:ATP binding"/>
    <property type="evidence" value="ECO:0007669"/>
    <property type="project" value="UniProtKB-KW"/>
</dbReference>
<dbReference type="GO" id="GO:0016887">
    <property type="term" value="F:ATP hydrolysis activity"/>
    <property type="evidence" value="ECO:0007669"/>
    <property type="project" value="RHEA"/>
</dbReference>
<dbReference type="GO" id="GO:0003729">
    <property type="term" value="F:mRNA binding"/>
    <property type="evidence" value="ECO:0000318"/>
    <property type="project" value="GO_Central"/>
</dbReference>
<dbReference type="GO" id="GO:0003724">
    <property type="term" value="F:RNA helicase activity"/>
    <property type="evidence" value="ECO:0000318"/>
    <property type="project" value="GO_Central"/>
</dbReference>
<dbReference type="GO" id="GO:0000380">
    <property type="term" value="P:alternative mRNA splicing, via spliceosome"/>
    <property type="evidence" value="ECO:0000318"/>
    <property type="project" value="GO_Central"/>
</dbReference>
<dbReference type="GO" id="GO:0000184">
    <property type="term" value="P:nuclear-transcribed mRNA catabolic process, nonsense-mediated decay"/>
    <property type="evidence" value="ECO:0007669"/>
    <property type="project" value="UniProtKB-KW"/>
</dbReference>
<dbReference type="GO" id="GO:0006364">
    <property type="term" value="P:rRNA processing"/>
    <property type="evidence" value="ECO:0000318"/>
    <property type="project" value="GO_Central"/>
</dbReference>
<dbReference type="CDD" id="cd17966">
    <property type="entry name" value="DEADc_DDX5_DDX17"/>
    <property type="match status" value="1"/>
</dbReference>
<dbReference type="CDD" id="cd18787">
    <property type="entry name" value="SF2_C_DEAD"/>
    <property type="match status" value="1"/>
</dbReference>
<dbReference type="FunFam" id="3.40.50.300:FF:000008">
    <property type="entry name" value="ATP-dependent RNA helicase RhlB"/>
    <property type="match status" value="1"/>
</dbReference>
<dbReference type="FunFam" id="3.40.50.300:FF:000079">
    <property type="entry name" value="probable ATP-dependent RNA helicase DDX17"/>
    <property type="match status" value="1"/>
</dbReference>
<dbReference type="Gene3D" id="3.40.50.300">
    <property type="entry name" value="P-loop containing nucleotide triphosphate hydrolases"/>
    <property type="match status" value="2"/>
</dbReference>
<dbReference type="InterPro" id="IPR011545">
    <property type="entry name" value="DEAD/DEAH_box_helicase_dom"/>
</dbReference>
<dbReference type="InterPro" id="IPR014001">
    <property type="entry name" value="Helicase_ATP-bd"/>
</dbReference>
<dbReference type="InterPro" id="IPR001650">
    <property type="entry name" value="Helicase_C-like"/>
</dbReference>
<dbReference type="InterPro" id="IPR027417">
    <property type="entry name" value="P-loop_NTPase"/>
</dbReference>
<dbReference type="InterPro" id="IPR000629">
    <property type="entry name" value="RNA-helicase_DEAD-box_CS"/>
</dbReference>
<dbReference type="InterPro" id="IPR014014">
    <property type="entry name" value="RNA_helicase_DEAD_Q_motif"/>
</dbReference>
<dbReference type="PANTHER" id="PTHR47958">
    <property type="entry name" value="ATP-DEPENDENT RNA HELICASE DBP3"/>
    <property type="match status" value="1"/>
</dbReference>
<dbReference type="Pfam" id="PF00270">
    <property type="entry name" value="DEAD"/>
    <property type="match status" value="1"/>
</dbReference>
<dbReference type="Pfam" id="PF00271">
    <property type="entry name" value="Helicase_C"/>
    <property type="match status" value="1"/>
</dbReference>
<dbReference type="SMART" id="SM00487">
    <property type="entry name" value="DEXDc"/>
    <property type="match status" value="1"/>
</dbReference>
<dbReference type="SMART" id="SM00490">
    <property type="entry name" value="HELICc"/>
    <property type="match status" value="1"/>
</dbReference>
<dbReference type="SUPFAM" id="SSF52540">
    <property type="entry name" value="P-loop containing nucleoside triphosphate hydrolases"/>
    <property type="match status" value="1"/>
</dbReference>
<dbReference type="PROSITE" id="PS00039">
    <property type="entry name" value="DEAD_ATP_HELICASE"/>
    <property type="match status" value="1"/>
</dbReference>
<dbReference type="PROSITE" id="PS51192">
    <property type="entry name" value="HELICASE_ATP_BIND_1"/>
    <property type="match status" value="1"/>
</dbReference>
<dbReference type="PROSITE" id="PS51194">
    <property type="entry name" value="HELICASE_CTER"/>
    <property type="match status" value="1"/>
</dbReference>
<dbReference type="PROSITE" id="PS51195">
    <property type="entry name" value="Q_MOTIF"/>
    <property type="match status" value="1"/>
</dbReference>
<accession>Q4PHU9</accession>
<accession>A0A0D1EC06</accession>
<accession>Q4PHV0</accession>
<comment type="function">
    <text evidence="1">ATP-dependent RNA helicase involved nonsense-mediated mRNA decay and ribosome biogenesis through rRNA processing.</text>
</comment>
<comment type="catalytic activity">
    <reaction>
        <text>ATP + H2O = ADP + phosphate + H(+)</text>
        <dbReference type="Rhea" id="RHEA:13065"/>
        <dbReference type="ChEBI" id="CHEBI:15377"/>
        <dbReference type="ChEBI" id="CHEBI:15378"/>
        <dbReference type="ChEBI" id="CHEBI:30616"/>
        <dbReference type="ChEBI" id="CHEBI:43474"/>
        <dbReference type="ChEBI" id="CHEBI:456216"/>
        <dbReference type="EC" id="3.6.4.13"/>
    </reaction>
</comment>
<comment type="subunit">
    <text evidence="1">Associates with polysomes.</text>
</comment>
<comment type="subcellular location">
    <subcellularLocation>
        <location evidence="1">Cytoplasm</location>
    </subcellularLocation>
    <subcellularLocation>
        <location evidence="1">Nucleus</location>
    </subcellularLocation>
</comment>
<comment type="domain">
    <text>The Q motif is unique to and characteristic of the DEAD box family of RNA helicases and controls ATP binding and hydrolysis.</text>
</comment>
<comment type="similarity">
    <text evidence="5">Belongs to the DEAD box helicase family. DDX5/DBP2 subfamily.</text>
</comment>
<feature type="chain" id="PRO_0000232171" description="ATP-dependent RNA helicase DBP2">
    <location>
        <begin position="1"/>
        <end position="552"/>
    </location>
</feature>
<feature type="domain" description="Helicase ATP-binding" evidence="2">
    <location>
        <begin position="161"/>
        <end position="336"/>
    </location>
</feature>
<feature type="domain" description="Helicase C-terminal" evidence="3">
    <location>
        <begin position="364"/>
        <end position="510"/>
    </location>
</feature>
<feature type="region of interest" description="Disordered" evidence="4">
    <location>
        <begin position="1"/>
        <end position="37"/>
    </location>
</feature>
<feature type="region of interest" description="Disordered" evidence="4">
    <location>
        <begin position="508"/>
        <end position="552"/>
    </location>
</feature>
<feature type="region of interest" description="RNA-binding RGG-box" evidence="1">
    <location>
        <begin position="517"/>
        <end position="537"/>
    </location>
</feature>
<feature type="short sequence motif" description="Q motif">
    <location>
        <begin position="130"/>
        <end position="158"/>
    </location>
</feature>
<feature type="short sequence motif" description="DEAD box">
    <location>
        <begin position="284"/>
        <end position="287"/>
    </location>
</feature>
<feature type="compositionally biased region" description="Gly residues" evidence="4">
    <location>
        <begin position="511"/>
        <end position="521"/>
    </location>
</feature>
<feature type="compositionally biased region" description="Gly residues" evidence="4">
    <location>
        <begin position="531"/>
        <end position="540"/>
    </location>
</feature>
<feature type="compositionally biased region" description="Polar residues" evidence="4">
    <location>
        <begin position="542"/>
        <end position="552"/>
    </location>
</feature>
<feature type="binding site" evidence="2">
    <location>
        <begin position="174"/>
        <end position="181"/>
    </location>
    <ligand>
        <name>ATP</name>
        <dbReference type="ChEBI" id="CHEBI:30616"/>
    </ligand>
</feature>
<protein>
    <recommendedName>
        <fullName>ATP-dependent RNA helicase DBP2</fullName>
        <ecNumber>3.6.4.13</ecNumber>
    </recommendedName>
</protein>
<reference key="1">
    <citation type="journal article" date="2006" name="Nature">
        <title>Insights from the genome of the biotrophic fungal plant pathogen Ustilago maydis.</title>
        <authorList>
            <person name="Kaemper J."/>
            <person name="Kahmann R."/>
            <person name="Boelker M."/>
            <person name="Ma L.-J."/>
            <person name="Brefort T."/>
            <person name="Saville B.J."/>
            <person name="Banuett F."/>
            <person name="Kronstad J.W."/>
            <person name="Gold S.E."/>
            <person name="Mueller O."/>
            <person name="Perlin M.H."/>
            <person name="Woesten H.A.B."/>
            <person name="de Vries R."/>
            <person name="Ruiz-Herrera J."/>
            <person name="Reynaga-Pena C.G."/>
            <person name="Snetselaar K."/>
            <person name="McCann M."/>
            <person name="Perez-Martin J."/>
            <person name="Feldbruegge M."/>
            <person name="Basse C.W."/>
            <person name="Steinberg G."/>
            <person name="Ibeas J.I."/>
            <person name="Holloman W."/>
            <person name="Guzman P."/>
            <person name="Farman M.L."/>
            <person name="Stajich J.E."/>
            <person name="Sentandreu R."/>
            <person name="Gonzalez-Prieto J.M."/>
            <person name="Kennell J.C."/>
            <person name="Molina L."/>
            <person name="Schirawski J."/>
            <person name="Mendoza-Mendoza A."/>
            <person name="Greilinger D."/>
            <person name="Muench K."/>
            <person name="Roessel N."/>
            <person name="Scherer M."/>
            <person name="Vranes M."/>
            <person name="Ladendorf O."/>
            <person name="Vincon V."/>
            <person name="Fuchs U."/>
            <person name="Sandrock B."/>
            <person name="Meng S."/>
            <person name="Ho E.C.H."/>
            <person name="Cahill M.J."/>
            <person name="Boyce K.J."/>
            <person name="Klose J."/>
            <person name="Klosterman S.J."/>
            <person name="Deelstra H.J."/>
            <person name="Ortiz-Castellanos L."/>
            <person name="Li W."/>
            <person name="Sanchez-Alonso P."/>
            <person name="Schreier P.H."/>
            <person name="Haeuser-Hahn I."/>
            <person name="Vaupel M."/>
            <person name="Koopmann E."/>
            <person name="Friedrich G."/>
            <person name="Voss H."/>
            <person name="Schlueter T."/>
            <person name="Margolis J."/>
            <person name="Platt D."/>
            <person name="Swimmer C."/>
            <person name="Gnirke A."/>
            <person name="Chen F."/>
            <person name="Vysotskaia V."/>
            <person name="Mannhaupt G."/>
            <person name="Gueldener U."/>
            <person name="Muensterkoetter M."/>
            <person name="Haase D."/>
            <person name="Oesterheld M."/>
            <person name="Mewes H.-W."/>
            <person name="Mauceli E.W."/>
            <person name="DeCaprio D."/>
            <person name="Wade C.M."/>
            <person name="Butler J."/>
            <person name="Young S.K."/>
            <person name="Jaffe D.B."/>
            <person name="Calvo S.E."/>
            <person name="Nusbaum C."/>
            <person name="Galagan J.E."/>
            <person name="Birren B.W."/>
        </authorList>
    </citation>
    <scope>NUCLEOTIDE SEQUENCE [LARGE SCALE GENOMIC DNA]</scope>
    <source>
        <strain>DSM 14603 / FGSC 9021 / UM521</strain>
    </source>
</reference>
<reference key="2">
    <citation type="submission" date="2014-09" db="EMBL/GenBank/DDBJ databases">
        <authorList>
            <person name="Gueldener U."/>
            <person name="Muensterkoetter M."/>
            <person name="Walter M.C."/>
            <person name="Mannhaupt G."/>
            <person name="Kahmann R."/>
        </authorList>
    </citation>
    <scope>GENOME REANNOTATION</scope>
    <source>
        <strain>DSM 14603 / FGSC 9021 / UM521</strain>
    </source>
</reference>